<sequence length="112" mass="12815">MTDPRETVPPGNSGEETIGEAFAWLNRTVEAINREAVNHLPRELIFQVWQRSWRYWHDEQGMSESYTKYRYLCIIQKAVYMHVRKGCTCLGRGHGPGGWRPGPPPPPPPGLV</sequence>
<gene>
    <name type="primary">vpx</name>
</gene>
<feature type="chain" id="PRO_0000085397" description="Protein Vpx">
    <location>
        <begin position="1"/>
        <end position="112"/>
    </location>
</feature>
<feature type="region of interest" description="Binds to human NUP153" evidence="4">
    <location>
        <begin position="61"/>
        <end position="80"/>
    </location>
</feature>
<feature type="region of interest" description="Disordered" evidence="5">
    <location>
        <begin position="93"/>
        <end position="112"/>
    </location>
</feature>
<feature type="short sequence motif" description="Nuclear localization signal" evidence="6">
    <location>
        <begin position="65"/>
        <end position="72"/>
    </location>
</feature>
<feature type="compositionally biased region" description="Pro residues" evidence="5">
    <location>
        <begin position="101"/>
        <end position="112"/>
    </location>
</feature>
<feature type="mutagenesis site" description="No effect on non-dividing cells infection." evidence="7">
    <original>SES</original>
    <variation>AEA</variation>
    <location>
        <begin position="63"/>
        <end position="65"/>
    </location>
</feature>
<feature type="mutagenesis site" description="Partial loss of non-dividing cells infection." evidence="7">
    <original>YTKYRY</original>
    <variation>ATKARA</variation>
    <location>
        <begin position="66"/>
        <end position="71"/>
    </location>
</feature>
<feature type="mutagenesis site" description="No effect on non-dividing cells infection." evidence="7">
    <original>YTKYRY</original>
    <variation>ATKYRA</variation>
    <location>
        <begin position="66"/>
        <end position="71"/>
    </location>
</feature>
<feature type="mutagenesis site" description="No effect on non-dividing cells infection." evidence="7">
    <original>YTKYRY</original>
    <variation>FTKFRF</variation>
    <location>
        <begin position="66"/>
        <end position="71"/>
    </location>
</feature>
<feature type="mutagenesis site" description="Partial loss of non-dividing cells infection.">
    <original>YTKY</original>
    <variation>ATKA</variation>
    <location>
        <begin position="66"/>
        <end position="69"/>
    </location>
</feature>
<feature type="mutagenesis site" description="No effect on non-dividing cells infection.">
    <original>Y</original>
    <variation>A</variation>
    <location>
        <position position="66"/>
    </location>
</feature>
<feature type="mutagenesis site" description="Complete loss of non-dividing cells infection.">
    <original>KYR</original>
    <variation>AYA</variation>
    <location>
        <begin position="68"/>
        <end position="70"/>
    </location>
</feature>
<feature type="mutagenesis site" description="Partial loss of non-dividing cells infection.">
    <original>YRY</original>
    <variation>ARA</variation>
    <location>
        <begin position="69"/>
        <end position="71"/>
    </location>
</feature>
<feature type="mutagenesis site" description="Partial loss of non-dividing cells infection.">
    <original>Y</original>
    <variation>A</variation>
    <location>
        <position position="69"/>
    </location>
</feature>
<feature type="mutagenesis site" description="No effect on non-dividing cells infection.">
    <original>Y</original>
    <variation>A</variation>
    <location>
        <position position="71"/>
    </location>
</feature>
<evidence type="ECO:0000250" key="1"/>
<evidence type="ECO:0000250" key="2">
    <source>
        <dbReference type="UniProtKB" id="P12454"/>
    </source>
</evidence>
<evidence type="ECO:0000250" key="3">
    <source>
        <dbReference type="UniProtKB" id="P18099"/>
    </source>
</evidence>
<evidence type="ECO:0000250" key="4">
    <source>
        <dbReference type="UniProtKB" id="P19508"/>
    </source>
</evidence>
<evidence type="ECO:0000256" key="5">
    <source>
        <dbReference type="SAM" id="MobiDB-lite"/>
    </source>
</evidence>
<evidence type="ECO:0000269" key="6">
    <source>
    </source>
</evidence>
<evidence type="ECO:0000269" key="7">
    <source>
    </source>
</evidence>
<evidence type="ECO:0000269" key="8">
    <source>
    </source>
</evidence>
<evidence type="ECO:0000305" key="9"/>
<keyword id="KW-0014">AIDS</keyword>
<keyword id="KW-1048">Host nucleus</keyword>
<keyword id="KW-0945">Host-virus interaction</keyword>
<keyword id="KW-1090">Inhibition of host innate immune response by virus</keyword>
<keyword id="KW-0899">Viral immunoevasion</keyword>
<keyword id="KW-0946">Virion</keyword>
<dbReference type="EMBL" id="M15390">
    <property type="protein sequence ID" value="AAB00766.1"/>
    <property type="molecule type" value="Genomic_DNA"/>
</dbReference>
<dbReference type="EMBL" id="X05291">
    <property type="status" value="NOT_ANNOTATED_CDS"/>
    <property type="molecule type" value="Genomic_RNA"/>
</dbReference>
<dbReference type="PIR" id="I26262">
    <property type="entry name" value="ASLJX2"/>
</dbReference>
<dbReference type="SMR" id="P06939"/>
<dbReference type="Proteomes" id="UP000007426">
    <property type="component" value="Genome"/>
</dbReference>
<dbReference type="Proteomes" id="UP000246871">
    <property type="component" value="Segment"/>
</dbReference>
<dbReference type="GO" id="GO:0042025">
    <property type="term" value="C:host cell nucleus"/>
    <property type="evidence" value="ECO:0007669"/>
    <property type="project" value="UniProtKB-SubCell"/>
</dbReference>
<dbReference type="GO" id="GO:0044423">
    <property type="term" value="C:virion component"/>
    <property type="evidence" value="ECO:0007669"/>
    <property type="project" value="UniProtKB-KW"/>
</dbReference>
<dbReference type="GO" id="GO:0052170">
    <property type="term" value="P:symbiont-mediated suppression of host innate immune response"/>
    <property type="evidence" value="ECO:0007669"/>
    <property type="project" value="UniProtKB-KW"/>
</dbReference>
<dbReference type="GO" id="GO:0019058">
    <property type="term" value="P:viral life cycle"/>
    <property type="evidence" value="ECO:0007669"/>
    <property type="project" value="InterPro"/>
</dbReference>
<dbReference type="Gene3D" id="1.20.5.4730">
    <property type="match status" value="1"/>
</dbReference>
<dbReference type="InterPro" id="IPR053711">
    <property type="entry name" value="Lentiviral_Vpx_assoc_factor"/>
</dbReference>
<dbReference type="InterPro" id="IPR000012">
    <property type="entry name" value="RetroV_VpR/X"/>
</dbReference>
<dbReference type="Pfam" id="PF00522">
    <property type="entry name" value="VPR"/>
    <property type="match status" value="1"/>
</dbReference>
<accession>P06939</accession>
<reference key="1">
    <citation type="journal article" date="1987" name="Nature">
        <title>Genome organization and transactivation of the human immunodeficiency virus type 2.</title>
        <authorList>
            <person name="Guyader M."/>
            <person name="Emerman M."/>
            <person name="Sonigo P."/>
            <person name="Clavel F."/>
            <person name="Montagnier L."/>
            <person name="Alizon M."/>
        </authorList>
    </citation>
    <scope>NUCLEOTIDE SEQUENCE [GENOMIC DNA]</scope>
</reference>
<reference key="2">
    <citation type="journal article" date="2001" name="AIDS Res. Hum. Retroviruses">
        <title>HIV type 2 Vpx interaction with Gag and incorporation into virus-like particles.</title>
        <authorList>
            <person name="Jin L."/>
            <person name="Zhou Y."/>
            <person name="Ratner L."/>
        </authorList>
    </citation>
    <scope>INTERACTION WITH GAG</scope>
</reference>
<reference key="3">
    <citation type="journal article" date="2003" name="Virology">
        <title>Identification of the nuclear localization signal of human immunodeficiency virus type 2 Vpx.</title>
        <authorList>
            <person name="Belshan M."/>
            <person name="Ratner L."/>
        </authorList>
    </citation>
    <scope>NUCLEAR LOCALIZATION SIGNAL</scope>
</reference>
<reference key="4">
    <citation type="journal article" date="2006" name="Virology">
        <title>Analysis of HIV-2 Vpx by modeling and insertional mutagenesis.</title>
        <authorList>
            <person name="Mahnke L.A."/>
            <person name="Belshan M."/>
            <person name="Ratner L."/>
        </authorList>
    </citation>
    <scope>FUNCTION</scope>
</reference>
<reference key="5">
    <citation type="journal article" date="2006" name="Virology">
        <title>Conserved amino acids of the human immunodeficiency virus type 2 Vpx nuclear localization signal are critical for nuclear targeting of the viral preintegration complex in non-dividing cells.</title>
        <authorList>
            <person name="Belshan M."/>
            <person name="Mahnke L.A."/>
            <person name="Ratner L."/>
        </authorList>
    </citation>
    <scope>MUTAGENESIS OF 63-SER--SER-65 AND 66-TYR--TYR-71</scope>
</reference>
<organism>
    <name type="scientific">Human immunodeficiency virus type 2 subtype A (isolate ROD)</name>
    <name type="common">HIV-2</name>
    <dbReference type="NCBI Taxonomy" id="11720"/>
    <lineage>
        <taxon>Viruses</taxon>
        <taxon>Riboviria</taxon>
        <taxon>Pararnavirae</taxon>
        <taxon>Artverviricota</taxon>
        <taxon>Revtraviricetes</taxon>
        <taxon>Ortervirales</taxon>
        <taxon>Retroviridae</taxon>
        <taxon>Orthoretrovirinae</taxon>
        <taxon>Lentivirus</taxon>
        <taxon>Human immunodeficiency virus 2</taxon>
    </lineage>
</organism>
<name>VPX_HV2RO</name>
<organismHost>
    <name type="scientific">Homo sapiens</name>
    <name type="common">Human</name>
    <dbReference type="NCBI Taxonomy" id="9606"/>
</organismHost>
<protein>
    <recommendedName>
        <fullName>Protein Vpx</fullName>
    </recommendedName>
    <alternativeName>
        <fullName>Viral protein X</fullName>
    </alternativeName>
    <alternativeName>
        <fullName>X ORF protein</fullName>
    </alternativeName>
</protein>
<comment type="function">
    <text evidence="1 8">Plays a role in nuclear translocation of the viral pre-integration complex (PIC), thus is required for the virus to infect non-dividing cells. Targets specific host proteins for degradation by the 26S proteasome. Acts by associating with the cellular CUL4A-DDB1 E3 ligase complex through direct interaction with host VPRPB/DCAF-1. This change in the E3 ligase substrate specificity results in the degradation of host SAMHD1. In turn, SAMHD1 depletion allows viral replication in host myeloid cells by preventing SAMHD1-mediated hydrolysis of intracellular dNTPs necessary for reverse transcription (By similarity).</text>
</comment>
<comment type="subunit">
    <text evidence="1 2 3">Interacts with the P6 region of unprocessed GAG (By similarity). Interacts with host VPRBP/DCAF1, leading to change substrate specificity of the CUL4A-DDB1 E3 ligase complex (By similarity). Interacts with host NUP153 (By similarity).</text>
</comment>
<comment type="subcellular location">
    <subcellularLocation>
        <location>Virion</location>
    </subcellularLocation>
    <subcellularLocation>
        <location>Host nucleus</location>
    </subcellularLocation>
    <text>Nuclear just after virion uncoating, or if expressed in the absence of unprocessed GAG.</text>
</comment>
<comment type="similarity">
    <text evidence="9">Belongs to the lentivirus VPX protein family.</text>
</comment>
<proteinExistence type="evidence at protein level"/>